<comment type="catalytic activity">
    <reaction evidence="1">
        <text>1-(5-phospho-beta-D-ribosyl)-5-[(5-phospho-beta-D-ribosylamino)methylideneamino]imidazole-4-carboxamide = 5-[(5-phospho-1-deoxy-D-ribulos-1-ylimino)methylamino]-1-(5-phospho-beta-D-ribosyl)imidazole-4-carboxamide</text>
        <dbReference type="Rhea" id="RHEA:15469"/>
        <dbReference type="ChEBI" id="CHEBI:58435"/>
        <dbReference type="ChEBI" id="CHEBI:58525"/>
        <dbReference type="EC" id="5.3.1.16"/>
    </reaction>
</comment>
<comment type="pathway">
    <text evidence="1">Amino-acid biosynthesis; L-histidine biosynthesis; L-histidine from 5-phospho-alpha-D-ribose 1-diphosphate: step 4/9.</text>
</comment>
<comment type="subcellular location">
    <subcellularLocation>
        <location evidence="1">Cytoplasm</location>
    </subcellularLocation>
</comment>
<comment type="similarity">
    <text evidence="1">Belongs to the HisA/HisF family.</text>
</comment>
<feature type="chain" id="PRO_0000290549" description="1-(5-phosphoribosyl)-5-[(5-phosphoribosylamino)methylideneamino] imidazole-4-carboxamide isomerase">
    <location>
        <begin position="1"/>
        <end position="242"/>
    </location>
</feature>
<feature type="active site" description="Proton acceptor" evidence="1">
    <location>
        <position position="10"/>
    </location>
</feature>
<feature type="active site" description="Proton donor" evidence="1">
    <location>
        <position position="132"/>
    </location>
</feature>
<protein>
    <recommendedName>
        <fullName evidence="1">1-(5-phosphoribosyl)-5-[(5-phosphoribosylamino)methylideneamino] imidazole-4-carboxamide isomerase</fullName>
        <ecNumber evidence="1">5.3.1.16</ecNumber>
    </recommendedName>
    <alternativeName>
        <fullName evidence="1">Phosphoribosylformimino-5-aminoimidazole carboxamide ribotide isomerase</fullName>
    </alternativeName>
</protein>
<dbReference type="EC" id="5.3.1.16" evidence="1"/>
<dbReference type="EMBL" id="CP000387">
    <property type="protein sequence ID" value="ABN44836.1"/>
    <property type="molecule type" value="Genomic_DNA"/>
</dbReference>
<dbReference type="RefSeq" id="YP_001035386.1">
    <property type="nucleotide sequence ID" value="NC_009009.1"/>
</dbReference>
<dbReference type="SMR" id="A3CNT1"/>
<dbReference type="STRING" id="388919.SSA_1443"/>
<dbReference type="KEGG" id="ssa:SSA_1443"/>
<dbReference type="PATRIC" id="fig|388919.9.peg.1368"/>
<dbReference type="eggNOG" id="COG0106">
    <property type="taxonomic scope" value="Bacteria"/>
</dbReference>
<dbReference type="HOGENOM" id="CLU_048577_1_2_9"/>
<dbReference type="OrthoDB" id="9807749at2"/>
<dbReference type="UniPathway" id="UPA00031">
    <property type="reaction ID" value="UER00009"/>
</dbReference>
<dbReference type="Proteomes" id="UP000002148">
    <property type="component" value="Chromosome"/>
</dbReference>
<dbReference type="GO" id="GO:0005737">
    <property type="term" value="C:cytoplasm"/>
    <property type="evidence" value="ECO:0007669"/>
    <property type="project" value="UniProtKB-SubCell"/>
</dbReference>
<dbReference type="GO" id="GO:0003949">
    <property type="term" value="F:1-(5-phosphoribosyl)-5-[(5-phosphoribosylamino)methylideneamino]imidazole-4-carboxamide isomerase activity"/>
    <property type="evidence" value="ECO:0007669"/>
    <property type="project" value="UniProtKB-UniRule"/>
</dbReference>
<dbReference type="GO" id="GO:0000105">
    <property type="term" value="P:L-histidine biosynthetic process"/>
    <property type="evidence" value="ECO:0007669"/>
    <property type="project" value="UniProtKB-UniRule"/>
</dbReference>
<dbReference type="GO" id="GO:0000162">
    <property type="term" value="P:L-tryptophan biosynthetic process"/>
    <property type="evidence" value="ECO:0007669"/>
    <property type="project" value="TreeGrafter"/>
</dbReference>
<dbReference type="CDD" id="cd04732">
    <property type="entry name" value="HisA"/>
    <property type="match status" value="1"/>
</dbReference>
<dbReference type="FunFam" id="3.20.20.70:FF:000009">
    <property type="entry name" value="1-(5-phosphoribosyl)-5-[(5-phosphoribosylamino)methylideneamino] imidazole-4-carboxamide isomerase"/>
    <property type="match status" value="1"/>
</dbReference>
<dbReference type="Gene3D" id="3.20.20.70">
    <property type="entry name" value="Aldolase class I"/>
    <property type="match status" value="1"/>
</dbReference>
<dbReference type="HAMAP" id="MF_01014">
    <property type="entry name" value="HisA"/>
    <property type="match status" value="1"/>
</dbReference>
<dbReference type="InterPro" id="IPR013785">
    <property type="entry name" value="Aldolase_TIM"/>
</dbReference>
<dbReference type="InterPro" id="IPR006062">
    <property type="entry name" value="His_biosynth"/>
</dbReference>
<dbReference type="InterPro" id="IPR006063">
    <property type="entry name" value="HisA_bact_arch"/>
</dbReference>
<dbReference type="InterPro" id="IPR044524">
    <property type="entry name" value="Isoase_HisA-like"/>
</dbReference>
<dbReference type="InterPro" id="IPR023016">
    <property type="entry name" value="Isoase_HisA-like_bact"/>
</dbReference>
<dbReference type="InterPro" id="IPR011060">
    <property type="entry name" value="RibuloseP-bd_barrel"/>
</dbReference>
<dbReference type="NCBIfam" id="TIGR00007">
    <property type="entry name" value="1-(5-phosphoribosyl)-5-[(5-phosphoribosylamino)methylideneamino]imidazole-4-carboxamide isomerase"/>
    <property type="match status" value="1"/>
</dbReference>
<dbReference type="PANTHER" id="PTHR43090">
    <property type="entry name" value="1-(5-PHOSPHORIBOSYL)-5-[(5-PHOSPHORIBOSYLAMINO)METHYLIDENEAMINO] IMIDAZOLE-4-CARBOXAMIDE ISOMERASE"/>
    <property type="match status" value="1"/>
</dbReference>
<dbReference type="PANTHER" id="PTHR43090:SF2">
    <property type="entry name" value="1-(5-PHOSPHORIBOSYL)-5-[(5-PHOSPHORIBOSYLAMINO)METHYLIDENEAMINO] IMIDAZOLE-4-CARBOXAMIDE ISOMERASE"/>
    <property type="match status" value="1"/>
</dbReference>
<dbReference type="Pfam" id="PF00977">
    <property type="entry name" value="His_biosynth"/>
    <property type="match status" value="1"/>
</dbReference>
<dbReference type="SUPFAM" id="SSF51366">
    <property type="entry name" value="Ribulose-phoshate binding barrel"/>
    <property type="match status" value="1"/>
</dbReference>
<reference key="1">
    <citation type="journal article" date="2007" name="J. Bacteriol.">
        <title>Genome of the opportunistic pathogen Streptococcus sanguinis.</title>
        <authorList>
            <person name="Xu P."/>
            <person name="Alves J.M."/>
            <person name="Kitten T."/>
            <person name="Brown A."/>
            <person name="Chen Z."/>
            <person name="Ozaki L.S."/>
            <person name="Manque P."/>
            <person name="Ge X."/>
            <person name="Serrano M.G."/>
            <person name="Puiu D."/>
            <person name="Hendricks S."/>
            <person name="Wang Y."/>
            <person name="Chaplin M.D."/>
            <person name="Akan D."/>
            <person name="Paik S."/>
            <person name="Peterson D.L."/>
            <person name="Macrina F.L."/>
            <person name="Buck G.A."/>
        </authorList>
    </citation>
    <scope>NUCLEOTIDE SEQUENCE [LARGE SCALE GENOMIC DNA]</scope>
    <source>
        <strain>SK36</strain>
    </source>
</reference>
<name>HIS4_STRSV</name>
<keyword id="KW-0028">Amino-acid biosynthesis</keyword>
<keyword id="KW-0963">Cytoplasm</keyword>
<keyword id="KW-0368">Histidine biosynthesis</keyword>
<keyword id="KW-0413">Isomerase</keyword>
<keyword id="KW-1185">Reference proteome</keyword>
<proteinExistence type="inferred from homology"/>
<gene>
    <name evidence="1" type="primary">hisA</name>
    <name type="ordered locus">SSA_1443</name>
</gene>
<accession>A3CNT1</accession>
<organism>
    <name type="scientific">Streptococcus sanguinis (strain SK36)</name>
    <dbReference type="NCBI Taxonomy" id="388919"/>
    <lineage>
        <taxon>Bacteria</taxon>
        <taxon>Bacillati</taxon>
        <taxon>Bacillota</taxon>
        <taxon>Bacilli</taxon>
        <taxon>Lactobacillales</taxon>
        <taxon>Streptococcaceae</taxon>
        <taxon>Streptococcus</taxon>
    </lineage>
</organism>
<sequence>MSMKILPAIDIKDGQAVRLFKGDFSQKTVVNPDVLEQARVFKEAGVTMIHVVDLEGALEGRAANRDLIAQIKAETGLAIQVGGGIRSLEQIEDYLAVGIDRVIIGSMAVKNPEFVEAALERFGSGKIVIGIDAKEGLVATEGWLETSNQDYISLALAMEKIGVRLFVYTDVDRDGTLTGPNIQHYQKLLASLKHAQVIASGGIQSADDLEEMKKLGLAGAIVGKAYYSGRISLEQIKEAERG</sequence>
<evidence type="ECO:0000255" key="1">
    <source>
        <dbReference type="HAMAP-Rule" id="MF_01014"/>
    </source>
</evidence>